<sequence>MLKRRSNALITLSRTKLFPITTVAYYHRRLLNQQRRAVSTSPKKEIKSLEDLANLDSLDGVDTELIRDLINEHTTKLNIKKELDMLKKFSQEEESGHEIPVKRFIRPLWMFILMGSSVYLLLHFSWWKLEHEERESQLKKEVEILEHQLNELIVQDKTHNTSRGKGSNESTHMKPWYRRWFW</sequence>
<feature type="transit peptide" description="Mitochondrion" evidence="1">
    <location>
        <begin position="1"/>
        <end position="45"/>
    </location>
</feature>
<feature type="chain" id="PRO_0000238621" description="Inner membrane assembly complex subunit 17" evidence="1">
    <location>
        <begin position="46"/>
        <end position="182"/>
    </location>
</feature>
<feature type="topological domain" description="Mitochondrial matrix" evidence="8">
    <location>
        <begin position="46"/>
        <end position="107"/>
    </location>
</feature>
<feature type="transmembrane region" description="Helical" evidence="1">
    <location>
        <begin position="108"/>
        <end position="127"/>
    </location>
</feature>
<feature type="topological domain" description="Mitochondrial intermembrane" evidence="8">
    <location>
        <begin position="128"/>
        <end position="182"/>
    </location>
</feature>
<feature type="coiled-coil region" evidence="1">
    <location>
        <begin position="128"/>
        <end position="158"/>
    </location>
</feature>
<reference key="1">
    <citation type="journal article" date="1997" name="Nature">
        <title>The nucleotide sequence of Saccharomyces cerevisiae chromosome XVI.</title>
        <authorList>
            <person name="Bussey H."/>
            <person name="Storms R.K."/>
            <person name="Ahmed A."/>
            <person name="Albermann K."/>
            <person name="Allen E."/>
            <person name="Ansorge W."/>
            <person name="Araujo R."/>
            <person name="Aparicio A."/>
            <person name="Barrell B.G."/>
            <person name="Badcock K."/>
            <person name="Benes V."/>
            <person name="Botstein D."/>
            <person name="Bowman S."/>
            <person name="Brueckner M."/>
            <person name="Carpenter J."/>
            <person name="Cherry J.M."/>
            <person name="Chung E."/>
            <person name="Churcher C.M."/>
            <person name="Coster F."/>
            <person name="Davis K."/>
            <person name="Davis R.W."/>
            <person name="Dietrich F.S."/>
            <person name="Delius H."/>
            <person name="DiPaolo T."/>
            <person name="Dubois E."/>
            <person name="Duesterhoeft A."/>
            <person name="Duncan M."/>
            <person name="Floeth M."/>
            <person name="Fortin N."/>
            <person name="Friesen J.D."/>
            <person name="Fritz C."/>
            <person name="Goffeau A."/>
            <person name="Hall J."/>
            <person name="Hebling U."/>
            <person name="Heumann K."/>
            <person name="Hilbert H."/>
            <person name="Hillier L.W."/>
            <person name="Hunicke-Smith S."/>
            <person name="Hyman R.W."/>
            <person name="Johnston M."/>
            <person name="Kalman S."/>
            <person name="Kleine K."/>
            <person name="Komp C."/>
            <person name="Kurdi O."/>
            <person name="Lashkari D."/>
            <person name="Lew H."/>
            <person name="Lin A."/>
            <person name="Lin D."/>
            <person name="Louis E.J."/>
            <person name="Marathe R."/>
            <person name="Messenguy F."/>
            <person name="Mewes H.-W."/>
            <person name="Mirtipati S."/>
            <person name="Moestl D."/>
            <person name="Mueller-Auer S."/>
            <person name="Namath A."/>
            <person name="Nentwich U."/>
            <person name="Oefner P."/>
            <person name="Pearson D."/>
            <person name="Petel F.X."/>
            <person name="Pohl T.M."/>
            <person name="Purnelle B."/>
            <person name="Rajandream M.A."/>
            <person name="Rechmann S."/>
            <person name="Rieger M."/>
            <person name="Riles L."/>
            <person name="Roberts D."/>
            <person name="Schaefer M."/>
            <person name="Scharfe M."/>
            <person name="Scherens B."/>
            <person name="Schramm S."/>
            <person name="Schroeder M."/>
            <person name="Sdicu A.-M."/>
            <person name="Tettelin H."/>
            <person name="Urrestarazu L.A."/>
            <person name="Ushinsky S."/>
            <person name="Vierendeels F."/>
            <person name="Vissers S."/>
            <person name="Voss H."/>
            <person name="Walsh S.V."/>
            <person name="Wambutt R."/>
            <person name="Wang Y."/>
            <person name="Wedler E."/>
            <person name="Wedler H."/>
            <person name="Winnett E."/>
            <person name="Zhong W.-W."/>
            <person name="Zollner A."/>
            <person name="Vo D.H."/>
            <person name="Hani J."/>
        </authorList>
    </citation>
    <scope>NUCLEOTIDE SEQUENCE [LARGE SCALE GENOMIC DNA]</scope>
    <source>
        <strain>ATCC 204508 / S288c</strain>
    </source>
</reference>
<reference key="2">
    <citation type="journal article" date="2014" name="G3 (Bethesda)">
        <title>The reference genome sequence of Saccharomyces cerevisiae: Then and now.</title>
        <authorList>
            <person name="Engel S.R."/>
            <person name="Dietrich F.S."/>
            <person name="Fisk D.G."/>
            <person name="Binkley G."/>
            <person name="Balakrishnan R."/>
            <person name="Costanzo M.C."/>
            <person name="Dwight S.S."/>
            <person name="Hitz B.C."/>
            <person name="Karra K."/>
            <person name="Nash R.S."/>
            <person name="Weng S."/>
            <person name="Wong E.D."/>
            <person name="Lloyd P."/>
            <person name="Skrzypek M.S."/>
            <person name="Miyasato S.R."/>
            <person name="Simison M."/>
            <person name="Cherry J.M."/>
        </authorList>
    </citation>
    <scope>GENOME REANNOTATION</scope>
    <source>
        <strain>ATCC 204508 / S288c</strain>
    </source>
</reference>
<reference key="3">
    <citation type="journal article" date="2003" name="Proc. Natl. Acad. Sci. U.S.A.">
        <title>The proteome of Saccharomyces cerevisiae mitochondria.</title>
        <authorList>
            <person name="Sickmann A."/>
            <person name="Reinders J."/>
            <person name="Wagner Y."/>
            <person name="Joppich C."/>
            <person name="Zahedi R.P."/>
            <person name="Meyer H.E."/>
            <person name="Schoenfisch B."/>
            <person name="Perschil I."/>
            <person name="Chacinska A."/>
            <person name="Guiard B."/>
            <person name="Rehling P."/>
            <person name="Pfanner N."/>
            <person name="Meisinger C."/>
        </authorList>
    </citation>
    <scope>SUBCELLULAR LOCATION [LARGE SCALE ANALYSIS]</scope>
    <source>
        <strain>ATCC 76625 / YPH499</strain>
    </source>
</reference>
<reference key="4">
    <citation type="journal article" date="2009" name="PLoS Genet.">
        <title>Computationally driven, quantitative experiments discover genes required for mitochondrial biogenesis.</title>
        <authorList>
            <person name="Hess D.C."/>
            <person name="Myers C.L."/>
            <person name="Huttenhower C."/>
            <person name="Hibbs M.A."/>
            <person name="Hayes A.P."/>
            <person name="Paw J."/>
            <person name="Clore J.J."/>
            <person name="Mendoza R.M."/>
            <person name="Luis B.S."/>
            <person name="Nislow C."/>
            <person name="Giaever G."/>
            <person name="Costanzo M."/>
            <person name="Troyanskaya O.G."/>
            <person name="Caudy A.A."/>
        </authorList>
    </citation>
    <scope>DISRUPTION PHENOTYPE</scope>
</reference>
<reference key="5">
    <citation type="journal article" date="2014" name="EMBO J.">
        <title>The INA complex facilitates assembly of the peripheral stalk of the mitochondrial F1Fo-ATP synthase.</title>
        <authorList>
            <person name="Lytovchenko O."/>
            <person name="Naumenko N."/>
            <person name="Oeljeklaus S."/>
            <person name="Schmidt B."/>
            <person name="von der Malsburg K."/>
            <person name="Deckers M."/>
            <person name="Warscheid B."/>
            <person name="van der Laan M."/>
            <person name="Rehling P."/>
        </authorList>
    </citation>
    <scope>FUNCTION</scope>
    <scope>INTERACTION WITH INA22</scope>
    <scope>SUBCELLULAR LOCATION</scope>
    <scope>TOPOLOGY</scope>
</reference>
<dbReference type="EMBL" id="U43281">
    <property type="protein sequence ID" value="AAB68200.1"/>
    <property type="molecule type" value="Genomic_DNA"/>
</dbReference>
<dbReference type="EMBL" id="BK006949">
    <property type="protein sequence ID" value="DAA11333.1"/>
    <property type="molecule type" value="Genomic_DNA"/>
</dbReference>
<dbReference type="PIR" id="S61967">
    <property type="entry name" value="S61967"/>
</dbReference>
<dbReference type="RefSeq" id="NP_015226.1">
    <property type="nucleotide sequence ID" value="NM_001183913.1"/>
</dbReference>
<dbReference type="SMR" id="Q02888"/>
<dbReference type="BioGRID" id="36081">
    <property type="interactions" value="122"/>
</dbReference>
<dbReference type="ComplexPortal" id="CPX-3279">
    <property type="entry name" value="INAC inner membrane assembly complex"/>
</dbReference>
<dbReference type="FunCoup" id="Q02888">
    <property type="interactions" value="68"/>
</dbReference>
<dbReference type="IntAct" id="Q02888">
    <property type="interactions" value="4"/>
</dbReference>
<dbReference type="MINT" id="Q02888"/>
<dbReference type="STRING" id="4932.YPL099C"/>
<dbReference type="GlyGen" id="Q02888">
    <property type="glycosylation" value="2 sites, 1 O-linked glycan (2 sites)"/>
</dbReference>
<dbReference type="PaxDb" id="4932-YPL099C"/>
<dbReference type="PeptideAtlas" id="Q02888"/>
<dbReference type="EnsemblFungi" id="YPL099C_mRNA">
    <property type="protein sequence ID" value="YPL099C"/>
    <property type="gene ID" value="YPL099C"/>
</dbReference>
<dbReference type="GeneID" id="856005"/>
<dbReference type="KEGG" id="sce:YPL099C"/>
<dbReference type="AGR" id="SGD:S000006020"/>
<dbReference type="SGD" id="S000006020">
    <property type="gene designation" value="INA17"/>
</dbReference>
<dbReference type="VEuPathDB" id="FungiDB:YPL099C"/>
<dbReference type="eggNOG" id="ENOG502S3U1">
    <property type="taxonomic scope" value="Eukaryota"/>
</dbReference>
<dbReference type="HOGENOM" id="CLU_127263_0_0_1"/>
<dbReference type="InParanoid" id="Q02888"/>
<dbReference type="OMA" id="HYVWWKL"/>
<dbReference type="OrthoDB" id="4082954at2759"/>
<dbReference type="BioCyc" id="YEAST:G3O-34002-MONOMER"/>
<dbReference type="BioGRID-ORCS" id="856005">
    <property type="hits" value="0 hits in 10 CRISPR screens"/>
</dbReference>
<dbReference type="PRO" id="PR:Q02888"/>
<dbReference type="Proteomes" id="UP000002311">
    <property type="component" value="Chromosome XVI"/>
</dbReference>
<dbReference type="RNAct" id="Q02888">
    <property type="molecule type" value="protein"/>
</dbReference>
<dbReference type="GO" id="GO:1990524">
    <property type="term" value="C:INA complex"/>
    <property type="evidence" value="ECO:0000314"/>
    <property type="project" value="SGD"/>
</dbReference>
<dbReference type="GO" id="GO:0005743">
    <property type="term" value="C:mitochondrial inner membrane"/>
    <property type="evidence" value="ECO:0000314"/>
    <property type="project" value="ComplexPortal"/>
</dbReference>
<dbReference type="GO" id="GO:1990677">
    <property type="term" value="C:mitochondrial inner membrane assembly complex"/>
    <property type="evidence" value="ECO:0000353"/>
    <property type="project" value="ComplexPortal"/>
</dbReference>
<dbReference type="GO" id="GO:0005739">
    <property type="term" value="C:mitochondrion"/>
    <property type="evidence" value="ECO:0007005"/>
    <property type="project" value="SGD"/>
</dbReference>
<dbReference type="GO" id="GO:0033615">
    <property type="term" value="P:mitochondrial proton-transporting ATP synthase complex assembly"/>
    <property type="evidence" value="ECO:0000314"/>
    <property type="project" value="ComplexPortal"/>
</dbReference>
<comment type="function">
    <text evidence="3">Component of the INA complex (INAC) that promotes the biogenesis of mitochondrial F(1)F(0)-ATP synthase. INAC facilitates the assembly of the peripheral stalk and promotes the assembly of the catalytic F(1)-domain with the membrane-embedded F(0)-domain.</text>
</comment>
<comment type="subunit">
    <text evidence="3">Component of the inner membrane assembly (INA) complex, composed of INA17 and INA22. Interacts with a subset of F(1)F(0)-ATP synthase subunits of the F(1)-domain and the peripheral stalk.</text>
</comment>
<comment type="interaction">
    <interactant intactId="EBI-7668387">
        <id>Q02888</id>
    </interactant>
    <interactant intactId="EBI-3242">
        <id>P00830</id>
        <label>ATP2</label>
    </interactant>
    <organismsDiffer>false</organismsDiffer>
    <experiments>2</experiments>
</comment>
<comment type="interaction">
    <interactant intactId="EBI-7668387">
        <id>Q02888</id>
    </interactant>
    <interactant intactId="EBI-25429">
        <id>P40576</id>
        <label>INA22</label>
    </interactant>
    <organismsDiffer>false</organismsDiffer>
    <experiments>4</experiments>
</comment>
<comment type="subcellular location">
    <subcellularLocation>
        <location evidence="3">Mitochondrion inner membrane</location>
        <topology evidence="1">Single-pass membrane protein</topology>
    </subcellularLocation>
</comment>
<comment type="disruption phenotype">
    <text evidence="2">Increases frequency of mitochondrial genome loss.</text>
</comment>
<comment type="similarity">
    <text evidence="7">Belongs to the INA17 family.</text>
</comment>
<evidence type="ECO:0000255" key="1"/>
<evidence type="ECO:0000269" key="2">
    <source>
    </source>
</evidence>
<evidence type="ECO:0000269" key="3">
    <source>
    </source>
</evidence>
<evidence type="ECO:0000303" key="4">
    <source>
    </source>
</evidence>
<evidence type="ECO:0000303" key="5">
    <source>
    </source>
</evidence>
<evidence type="ECO:0000303" key="6">
    <source>
    </source>
</evidence>
<evidence type="ECO:0000305" key="7"/>
<evidence type="ECO:0000305" key="8">
    <source>
    </source>
</evidence>
<evidence type="ECO:0000312" key="9">
    <source>
        <dbReference type="SGD" id="S000006020"/>
    </source>
</evidence>
<keyword id="KW-0143">Chaperone</keyword>
<keyword id="KW-0175">Coiled coil</keyword>
<keyword id="KW-0472">Membrane</keyword>
<keyword id="KW-0496">Mitochondrion</keyword>
<keyword id="KW-0999">Mitochondrion inner membrane</keyword>
<keyword id="KW-1185">Reference proteome</keyword>
<keyword id="KW-0809">Transit peptide</keyword>
<keyword id="KW-0812">Transmembrane</keyword>
<keyword id="KW-1133">Transmembrane helix</keyword>
<gene>
    <name evidence="6" type="primary">INA17</name>
    <name evidence="5" type="synonym">AIM43</name>
    <name evidence="4" type="synonym">FMP14</name>
    <name evidence="9" type="ordered locus">YPL099C</name>
</gene>
<accession>Q02888</accession>
<accession>D6W3R7</accession>
<name>INA17_YEAST</name>
<organism>
    <name type="scientific">Saccharomyces cerevisiae (strain ATCC 204508 / S288c)</name>
    <name type="common">Baker's yeast</name>
    <dbReference type="NCBI Taxonomy" id="559292"/>
    <lineage>
        <taxon>Eukaryota</taxon>
        <taxon>Fungi</taxon>
        <taxon>Dikarya</taxon>
        <taxon>Ascomycota</taxon>
        <taxon>Saccharomycotina</taxon>
        <taxon>Saccharomycetes</taxon>
        <taxon>Saccharomycetales</taxon>
        <taxon>Saccharomycetaceae</taxon>
        <taxon>Saccharomyces</taxon>
    </lineage>
</organism>
<protein>
    <recommendedName>
        <fullName evidence="8">Inner membrane assembly complex subunit 17</fullName>
    </recommendedName>
    <alternativeName>
        <fullName evidence="5">Altered inheritance of mitochondria protein 43</fullName>
    </alternativeName>
    <alternativeName>
        <fullName evidence="4">Found in mitochondrial proteome protein 14</fullName>
    </alternativeName>
    <alternativeName>
        <fullName evidence="6">INA complex 17 kDa subunit</fullName>
    </alternativeName>
</protein>
<proteinExistence type="evidence at protein level"/>